<organism>
    <name type="scientific">Saccharomyces cerevisiae (strain ATCC 204508 / S288c)</name>
    <name type="common">Baker's yeast</name>
    <dbReference type="NCBI Taxonomy" id="559292"/>
    <lineage>
        <taxon>Eukaryota</taxon>
        <taxon>Fungi</taxon>
        <taxon>Dikarya</taxon>
        <taxon>Ascomycota</taxon>
        <taxon>Saccharomycotina</taxon>
        <taxon>Saccharomycetes</taxon>
        <taxon>Saccharomycetales</taxon>
        <taxon>Saccharomycetaceae</taxon>
        <taxon>Saccharomyces</taxon>
    </lineage>
</organism>
<reference key="1">
    <citation type="journal article" date="1996" name="Yeast">
        <title>Sequence analysis of a 12 801 bp fragment of the left arm of yeast chromosome XV containing a putative 6-phosphofructo-2-kinase gene, a gene for a possible glycophospholipid-anchored surface protein and six other open reading frames.</title>
        <authorList>
            <person name="Aldea M."/>
            <person name="Piedrafita L."/>
            <person name="Casas C."/>
            <person name="Casamayor A."/>
            <person name="Khalid H."/>
            <person name="Balcells L."/>
            <person name="Arino J."/>
            <person name="Herrero E."/>
        </authorList>
    </citation>
    <scope>NUCLEOTIDE SEQUENCE [GENOMIC DNA]</scope>
    <source>
        <strain>ATCC 96604 / S288c / FY1679</strain>
    </source>
</reference>
<reference key="2">
    <citation type="journal article" date="1997" name="Nature">
        <title>The nucleotide sequence of Saccharomyces cerevisiae chromosome XV.</title>
        <authorList>
            <person name="Dujon B."/>
            <person name="Albermann K."/>
            <person name="Aldea M."/>
            <person name="Alexandraki D."/>
            <person name="Ansorge W."/>
            <person name="Arino J."/>
            <person name="Benes V."/>
            <person name="Bohn C."/>
            <person name="Bolotin-Fukuhara M."/>
            <person name="Bordonne R."/>
            <person name="Boyer J."/>
            <person name="Camasses A."/>
            <person name="Casamayor A."/>
            <person name="Casas C."/>
            <person name="Cheret G."/>
            <person name="Cziepluch C."/>
            <person name="Daignan-Fornier B."/>
            <person name="Dang V.-D."/>
            <person name="de Haan M."/>
            <person name="Delius H."/>
            <person name="Durand P."/>
            <person name="Fairhead C."/>
            <person name="Feldmann H."/>
            <person name="Gaillon L."/>
            <person name="Galisson F."/>
            <person name="Gamo F.-J."/>
            <person name="Gancedo C."/>
            <person name="Goffeau A."/>
            <person name="Goulding S.E."/>
            <person name="Grivell L.A."/>
            <person name="Habbig B."/>
            <person name="Hand N.J."/>
            <person name="Hani J."/>
            <person name="Hattenhorst U."/>
            <person name="Hebling U."/>
            <person name="Hernando Y."/>
            <person name="Herrero E."/>
            <person name="Heumann K."/>
            <person name="Hiesel R."/>
            <person name="Hilger F."/>
            <person name="Hofmann B."/>
            <person name="Hollenberg C.P."/>
            <person name="Hughes B."/>
            <person name="Jauniaux J.-C."/>
            <person name="Kalogeropoulos A."/>
            <person name="Katsoulou C."/>
            <person name="Kordes E."/>
            <person name="Lafuente M.J."/>
            <person name="Landt O."/>
            <person name="Louis E.J."/>
            <person name="Maarse A.C."/>
            <person name="Madania A."/>
            <person name="Mannhaupt G."/>
            <person name="Marck C."/>
            <person name="Martin R.P."/>
            <person name="Mewes H.-W."/>
            <person name="Michaux G."/>
            <person name="Paces V."/>
            <person name="Parle-McDermott A.G."/>
            <person name="Pearson B.M."/>
            <person name="Perrin A."/>
            <person name="Pettersson B."/>
            <person name="Poch O."/>
            <person name="Pohl T.M."/>
            <person name="Poirey R."/>
            <person name="Portetelle D."/>
            <person name="Pujol A."/>
            <person name="Purnelle B."/>
            <person name="Ramezani Rad M."/>
            <person name="Rechmann S."/>
            <person name="Schwager C."/>
            <person name="Schweizer M."/>
            <person name="Sor F."/>
            <person name="Sterky F."/>
            <person name="Tarassov I.A."/>
            <person name="Teodoru C."/>
            <person name="Tettelin H."/>
            <person name="Thierry A."/>
            <person name="Tobiasch E."/>
            <person name="Tzermia M."/>
            <person name="Uhlen M."/>
            <person name="Unseld M."/>
            <person name="Valens M."/>
            <person name="Vandenbol M."/>
            <person name="Vetter I."/>
            <person name="Vlcek C."/>
            <person name="Voet M."/>
            <person name="Volckaert G."/>
            <person name="Voss H."/>
            <person name="Wambutt R."/>
            <person name="Wedler H."/>
            <person name="Wiemann S."/>
            <person name="Winsor B."/>
            <person name="Wolfe K.H."/>
            <person name="Zollner A."/>
            <person name="Zumstein E."/>
            <person name="Kleine K."/>
        </authorList>
    </citation>
    <scope>NUCLEOTIDE SEQUENCE [LARGE SCALE GENOMIC DNA]</scope>
    <source>
        <strain>ATCC 204508 / S288c</strain>
    </source>
</reference>
<reference key="3">
    <citation type="journal article" date="2014" name="G3 (Bethesda)">
        <title>The reference genome sequence of Saccharomyces cerevisiae: Then and now.</title>
        <authorList>
            <person name="Engel S.R."/>
            <person name="Dietrich F.S."/>
            <person name="Fisk D.G."/>
            <person name="Binkley G."/>
            <person name="Balakrishnan R."/>
            <person name="Costanzo M.C."/>
            <person name="Dwight S.S."/>
            <person name="Hitz B.C."/>
            <person name="Karra K."/>
            <person name="Nash R.S."/>
            <person name="Weng S."/>
            <person name="Wong E.D."/>
            <person name="Lloyd P."/>
            <person name="Skrzypek M.S."/>
            <person name="Miyasato S.R."/>
            <person name="Simison M."/>
            <person name="Cherry J.M."/>
        </authorList>
    </citation>
    <scope>GENOME REANNOTATION</scope>
    <source>
        <strain>ATCC 204508 / S288c</strain>
    </source>
</reference>
<reference key="4">
    <citation type="journal article" date="2007" name="Genome Res.">
        <title>Approaching a complete repository of sequence-verified protein-encoding clones for Saccharomyces cerevisiae.</title>
        <authorList>
            <person name="Hu Y."/>
            <person name="Rolfs A."/>
            <person name="Bhullar B."/>
            <person name="Murthy T.V.S."/>
            <person name="Zhu C."/>
            <person name="Berger M.F."/>
            <person name="Camargo A.A."/>
            <person name="Kelley F."/>
            <person name="McCarron S."/>
            <person name="Jepson D."/>
            <person name="Richardson A."/>
            <person name="Raphael J."/>
            <person name="Moreira D."/>
            <person name="Taycher E."/>
            <person name="Zuo D."/>
            <person name="Mohr S."/>
            <person name="Kane M.F."/>
            <person name="Williamson J."/>
            <person name="Simpson A.J.G."/>
            <person name="Bulyk M.L."/>
            <person name="Harlow E."/>
            <person name="Marsischky G."/>
            <person name="Kolodner R.D."/>
            <person name="LaBaer J."/>
        </authorList>
    </citation>
    <scope>NUCLEOTIDE SEQUENCE [GENOMIC DNA]</scope>
    <source>
        <strain>ATCC 204508 / S288c</strain>
    </source>
</reference>
<reference key="5">
    <citation type="journal article" date="2000" name="Proc. Natl. Acad. Sci. U.S.A.">
        <title>Genome-wide characterization of the Zap1p zinc-responsive regulon in yeast.</title>
        <authorList>
            <person name="Lyons T.J."/>
            <person name="Gasch A.P."/>
            <person name="Gaither L.A."/>
            <person name="Botstein D."/>
            <person name="Brown P.O."/>
            <person name="Eide D.J."/>
        </authorList>
    </citation>
    <scope>INDUCTION</scope>
</reference>
<comment type="induction">
    <text evidence="2">By the zinc-responsive transcription factor ZAP1.</text>
</comment>
<sequence>MNTNKIAQDEVQDKVLQRAELAHSVWNLRFNLSKVAKRIRMETKVFPEIKINDAQSQLERSRCRIFSPDLEEEHVPLIQGFKCLDSPPPVPPSSSQGEDEENTVDSQY</sequence>
<accession>Q08270</accession>
<accession>D6W1T7</accession>
<evidence type="ECO:0000256" key="1">
    <source>
        <dbReference type="SAM" id="MobiDB-lite"/>
    </source>
</evidence>
<evidence type="ECO:0000269" key="2">
    <source>
    </source>
</evidence>
<dbReference type="EMBL" id="X95465">
    <property type="protein sequence ID" value="CAA64739.1"/>
    <property type="molecule type" value="Genomic_DNA"/>
</dbReference>
<dbReference type="EMBL" id="Z74873">
    <property type="protein sequence ID" value="CAA99151.1"/>
    <property type="molecule type" value="Genomic_DNA"/>
</dbReference>
<dbReference type="EMBL" id="AY692653">
    <property type="protein sequence ID" value="AAT92672.1"/>
    <property type="molecule type" value="Genomic_DNA"/>
</dbReference>
<dbReference type="EMBL" id="BK006948">
    <property type="protein sequence ID" value="DAA10653.1"/>
    <property type="molecule type" value="Genomic_DNA"/>
</dbReference>
<dbReference type="PIR" id="S66828">
    <property type="entry name" value="S66828"/>
</dbReference>
<dbReference type="RefSeq" id="NP_014510.1">
    <property type="nucleotide sequence ID" value="NM_001183385.1"/>
</dbReference>
<dbReference type="BioGRID" id="34244">
    <property type="interactions" value="61"/>
</dbReference>
<dbReference type="DIP" id="DIP-4144N"/>
<dbReference type="FunCoup" id="Q08270">
    <property type="interactions" value="42"/>
</dbReference>
<dbReference type="STRING" id="4932.YOL131W"/>
<dbReference type="PaxDb" id="4932-YOL131W"/>
<dbReference type="EnsemblFungi" id="YOL131W_mRNA">
    <property type="protein sequence ID" value="YOL131W"/>
    <property type="gene ID" value="YOL131W"/>
</dbReference>
<dbReference type="GeneID" id="853989"/>
<dbReference type="KEGG" id="sce:YOL131W"/>
<dbReference type="AGR" id="SGD:S000005491"/>
<dbReference type="SGD" id="S000005491">
    <property type="gene designation" value="YOL131W"/>
</dbReference>
<dbReference type="VEuPathDB" id="FungiDB:YOL131W"/>
<dbReference type="HOGENOM" id="CLU_2198487_0_0_1"/>
<dbReference type="InParanoid" id="Q08270"/>
<dbReference type="OMA" id="RCRIFSP"/>
<dbReference type="OrthoDB" id="4051844at2759"/>
<dbReference type="BioCyc" id="YEAST:G3O-33526-MONOMER"/>
<dbReference type="BioGRID-ORCS" id="853989">
    <property type="hits" value="0 hits in 10 CRISPR screens"/>
</dbReference>
<dbReference type="PRO" id="PR:Q08270"/>
<dbReference type="Proteomes" id="UP000002311">
    <property type="component" value="Chromosome XV"/>
</dbReference>
<dbReference type="RNAct" id="Q08270">
    <property type="molecule type" value="protein"/>
</dbReference>
<feature type="chain" id="PRO_0000235933" description="Uncharacterized protein YOL131W">
    <location>
        <begin position="1"/>
        <end position="108"/>
    </location>
</feature>
<feature type="region of interest" description="Disordered" evidence="1">
    <location>
        <begin position="81"/>
        <end position="108"/>
    </location>
</feature>
<feature type="compositionally biased region" description="Acidic residues" evidence="1">
    <location>
        <begin position="97"/>
        <end position="108"/>
    </location>
</feature>
<proteinExistence type="evidence at transcript level"/>
<gene>
    <name type="ordered locus">YOL131W</name>
</gene>
<name>YO131_YEAST</name>
<keyword id="KW-1185">Reference proteome</keyword>
<protein>
    <recommendedName>
        <fullName>Uncharacterized protein YOL131W</fullName>
    </recommendedName>
</protein>